<dbReference type="EMBL" id="U70214">
    <property type="protein sequence ID" value="AAB08592.1"/>
    <property type="molecule type" value="Genomic_DNA"/>
</dbReference>
<dbReference type="EMBL" id="U00096">
    <property type="protein sequence ID" value="AAC73273.2"/>
    <property type="molecule type" value="Genomic_DNA"/>
</dbReference>
<dbReference type="EMBL" id="AP009048">
    <property type="protein sequence ID" value="BAB96739.2"/>
    <property type="molecule type" value="Genomic_DNA"/>
</dbReference>
<dbReference type="PIR" id="B64740">
    <property type="entry name" value="B64740"/>
</dbReference>
<dbReference type="RefSeq" id="NP_414704.4">
    <property type="nucleotide sequence ID" value="NC_000913.3"/>
</dbReference>
<dbReference type="RefSeq" id="WP_000929443.1">
    <property type="nucleotide sequence ID" value="NZ_SSZK01000004.1"/>
</dbReference>
<dbReference type="SMR" id="P37047"/>
<dbReference type="BioGRID" id="4260992">
    <property type="interactions" value="118"/>
</dbReference>
<dbReference type="DIP" id="DIP-9258N"/>
<dbReference type="FunCoup" id="P37047">
    <property type="interactions" value="66"/>
</dbReference>
<dbReference type="STRING" id="511145.b0162"/>
<dbReference type="jPOST" id="P37047"/>
<dbReference type="PaxDb" id="511145-b0162"/>
<dbReference type="EnsemblBacteria" id="AAC73273">
    <property type="protein sequence ID" value="AAC73273"/>
    <property type="gene ID" value="b0162"/>
</dbReference>
<dbReference type="GeneID" id="944860"/>
<dbReference type="KEGG" id="ecj:JW5013"/>
<dbReference type="KEGG" id="eco:b0162"/>
<dbReference type="KEGG" id="ecoc:C3026_00740"/>
<dbReference type="PATRIC" id="fig|1411691.4.peg.2118"/>
<dbReference type="EchoBASE" id="EB2239"/>
<dbReference type="eggNOG" id="COG3835">
    <property type="taxonomic scope" value="Bacteria"/>
</dbReference>
<dbReference type="HOGENOM" id="CLU_043769_1_0_6"/>
<dbReference type="InParanoid" id="P37047"/>
<dbReference type="OMA" id="VRMTAEM"/>
<dbReference type="OrthoDB" id="9792148at2"/>
<dbReference type="PhylomeDB" id="P37047"/>
<dbReference type="BioCyc" id="EcoCyc:EG12335-MONOMER"/>
<dbReference type="PRO" id="PR:P37047"/>
<dbReference type="Proteomes" id="UP000000625">
    <property type="component" value="Chromosome"/>
</dbReference>
<dbReference type="GO" id="GO:0003700">
    <property type="term" value="F:DNA-binding transcription factor activity"/>
    <property type="evidence" value="ECO:0000315"/>
    <property type="project" value="EcoCyc"/>
</dbReference>
<dbReference type="GO" id="GO:0045893">
    <property type="term" value="P:positive regulation of DNA-templated transcription"/>
    <property type="evidence" value="ECO:0000315"/>
    <property type="project" value="EcoCyc"/>
</dbReference>
<dbReference type="FunFam" id="1.10.10.2840:FF:000001">
    <property type="entry name" value="Carbohydrate diacid transcriptional regulator"/>
    <property type="match status" value="1"/>
</dbReference>
<dbReference type="Gene3D" id="1.10.10.2840">
    <property type="entry name" value="PucR C-terminal helix-turn-helix domain"/>
    <property type="match status" value="1"/>
</dbReference>
<dbReference type="InterPro" id="IPR051448">
    <property type="entry name" value="CdaR-like_regulators"/>
</dbReference>
<dbReference type="InterPro" id="IPR041522">
    <property type="entry name" value="CdaR_GGDEF"/>
</dbReference>
<dbReference type="InterPro" id="IPR008599">
    <property type="entry name" value="Diacid_rec"/>
</dbReference>
<dbReference type="InterPro" id="IPR025736">
    <property type="entry name" value="PucR_C-HTH_dom"/>
</dbReference>
<dbReference type="InterPro" id="IPR042070">
    <property type="entry name" value="PucR_C-HTH_sf"/>
</dbReference>
<dbReference type="NCBIfam" id="NF008550">
    <property type="entry name" value="PRK11477.1"/>
    <property type="match status" value="1"/>
</dbReference>
<dbReference type="PANTHER" id="PTHR33744">
    <property type="entry name" value="CARBOHYDRATE DIACID REGULATOR"/>
    <property type="match status" value="1"/>
</dbReference>
<dbReference type="PANTHER" id="PTHR33744:SF15">
    <property type="entry name" value="CARBOHYDRATE DIACID REGULATOR"/>
    <property type="match status" value="1"/>
</dbReference>
<dbReference type="Pfam" id="PF05651">
    <property type="entry name" value="Diacid_rec"/>
    <property type="match status" value="1"/>
</dbReference>
<dbReference type="Pfam" id="PF17853">
    <property type="entry name" value="GGDEF_2"/>
    <property type="match status" value="1"/>
</dbReference>
<dbReference type="Pfam" id="PF13556">
    <property type="entry name" value="HTH_30"/>
    <property type="match status" value="1"/>
</dbReference>
<proteinExistence type="evidence at protein level"/>
<feature type="chain" id="PRO_0000165944" description="Carbohydrate diacid regulator">
    <location>
        <begin position="1"/>
        <end position="385"/>
    </location>
</feature>
<feature type="sequence variant" description="In strain: JA176; unable to grow on galactarate, glucarate and glycerate.">
    <original>P</original>
    <variation>S</variation>
    <location>
        <position position="292"/>
    </location>
</feature>
<gene>
    <name type="primary">cdaR</name>
    <name type="synonym">sdaR</name>
    <name type="synonym">yaeG</name>
    <name type="ordered locus">b0162</name>
    <name type="ordered locus">JW5013</name>
</gene>
<sequence>MAGWHLDTKMAQDIVARTMRIIDTNINVMDARGRIIGSGDRERIGELHEGALLVLSQGRVVDIDDAVARHLHGVRQGINLPLRLEGEIVGVIGLTGEPENLRKYGELVCMTAEMMLEQSRLMHLLAQDSRLREELVMNLIQAEENTPALTEWAQRLGIDLNQPRVVAIVEVDSGQLGVDSAMAELQQLQNALTTPERNNLVAIVSLTEMVVLKPALNSFGRWDAEDHRKRVEQLITRMKEYGQLRFRVSLGNYFTGPGSIARSYRTAKTTMVVGKQRMPESRCYFYQDLMLPVLLDSLRGDWQANELARPLARLKTMDNNGLLRRTLAAWFRHNVQPLATSKALFIHRNTLEYRLNRISELTGLDLGNFDDRLLLYVALQLDEER</sequence>
<evidence type="ECO:0000305" key="1"/>
<reference key="1">
    <citation type="journal article" date="1994" name="Nucleic Acids Res.">
        <title>Systematic sequencing of the Escherichia coli genome: analysis of the 2.4-4.1 min (110,917-193,643 bp) region.</title>
        <authorList>
            <person name="Fujita N."/>
            <person name="Mori H."/>
            <person name="Yura T."/>
            <person name="Ishihama A."/>
        </authorList>
    </citation>
    <scope>NUCLEOTIDE SEQUENCE [LARGE SCALE GENOMIC DNA]</scope>
    <source>
        <strain>K12 / W3110 / ATCC 27325 / DSM 5911</strain>
    </source>
</reference>
<reference key="2">
    <citation type="submission" date="1997-01" db="EMBL/GenBank/DDBJ databases">
        <title>Sequence of minutes 4-25 of Escherichia coli.</title>
        <authorList>
            <person name="Chung E."/>
            <person name="Allen E."/>
            <person name="Araujo R."/>
            <person name="Aparicio A.M."/>
            <person name="Davis K."/>
            <person name="Duncan M."/>
            <person name="Federspiel N."/>
            <person name="Hyman R."/>
            <person name="Kalman S."/>
            <person name="Komp C."/>
            <person name="Kurdi O."/>
            <person name="Lew H."/>
            <person name="Lin D."/>
            <person name="Namath A."/>
            <person name="Oefner P."/>
            <person name="Roberts D."/>
            <person name="Schramm S."/>
            <person name="Davis R.W."/>
        </authorList>
    </citation>
    <scope>NUCLEOTIDE SEQUENCE [LARGE SCALE GENOMIC DNA]</scope>
    <source>
        <strain>K12 / MG1655 / ATCC 47076</strain>
    </source>
</reference>
<reference key="3">
    <citation type="journal article" date="1997" name="Science">
        <title>The complete genome sequence of Escherichia coli K-12.</title>
        <authorList>
            <person name="Blattner F.R."/>
            <person name="Plunkett G. III"/>
            <person name="Bloch C.A."/>
            <person name="Perna N.T."/>
            <person name="Burland V."/>
            <person name="Riley M."/>
            <person name="Collado-Vides J."/>
            <person name="Glasner J.D."/>
            <person name="Rode C.K."/>
            <person name="Mayhew G.F."/>
            <person name="Gregor J."/>
            <person name="Davis N.W."/>
            <person name="Kirkpatrick H.A."/>
            <person name="Goeden M.A."/>
            <person name="Rose D.J."/>
            <person name="Mau B."/>
            <person name="Shao Y."/>
        </authorList>
    </citation>
    <scope>NUCLEOTIDE SEQUENCE [LARGE SCALE GENOMIC DNA]</scope>
    <source>
        <strain>K12 / MG1655 / ATCC 47076</strain>
    </source>
</reference>
<reference key="4">
    <citation type="journal article" date="2006" name="Mol. Syst. Biol.">
        <title>Highly accurate genome sequences of Escherichia coli K-12 strains MG1655 and W3110.</title>
        <authorList>
            <person name="Hayashi K."/>
            <person name="Morooka N."/>
            <person name="Yamamoto Y."/>
            <person name="Fujita K."/>
            <person name="Isono K."/>
            <person name="Choi S."/>
            <person name="Ohtsubo E."/>
            <person name="Baba T."/>
            <person name="Wanner B.L."/>
            <person name="Mori H."/>
            <person name="Horiuchi T."/>
        </authorList>
    </citation>
    <scope>NUCLEOTIDE SEQUENCE [LARGE SCALE GENOMIC DNA]</scope>
    <source>
        <strain>K12 / W3110 / ATCC 27325 / DSM 5911</strain>
    </source>
</reference>
<reference key="5">
    <citation type="journal article" date="2000" name="J. Bacteriol.">
        <title>A common regulator for the operons encoding the enzymes involved in D-galactarate, D-glucarate, and D-glycerate utilization in Escherichia coli.</title>
        <authorList>
            <person name="Monterrubio R."/>
            <person name="Baldoma L."/>
            <person name="Obradors N."/>
            <person name="Aguilar J."/>
            <person name="Badia J."/>
        </authorList>
    </citation>
    <scope>CHARACTERIZATION</scope>
    <source>
        <strain>K12 / MC4100 / ATCC 35695 / DSM 6574</strain>
        <strain>K12 / MC4100 / JA176</strain>
    </source>
</reference>
<comment type="function">
    <text>Seems to regulate the expression of the operons for the enzymes involved in D-galactarate, D-glucarate and D-glycerate utilization.</text>
</comment>
<comment type="similarity">
    <text evidence="1">Belongs to the CdaR family.</text>
</comment>
<protein>
    <recommendedName>
        <fullName>Carbohydrate diacid regulator</fullName>
    </recommendedName>
    <alternativeName>
        <fullName>Sugar diacid regulator</fullName>
    </alternativeName>
</protein>
<organism>
    <name type="scientific">Escherichia coli (strain K12)</name>
    <dbReference type="NCBI Taxonomy" id="83333"/>
    <lineage>
        <taxon>Bacteria</taxon>
        <taxon>Pseudomonadati</taxon>
        <taxon>Pseudomonadota</taxon>
        <taxon>Gammaproteobacteria</taxon>
        <taxon>Enterobacterales</taxon>
        <taxon>Enterobacteriaceae</taxon>
        <taxon>Escherichia</taxon>
    </lineage>
</organism>
<keyword id="KW-1185">Reference proteome</keyword>
<keyword id="KW-0804">Transcription</keyword>
<keyword id="KW-0805">Transcription regulation</keyword>
<accession>P37047</accession>
<accession>Q8KJQ0</accession>
<name>CDAR_ECOLI</name>